<dbReference type="EMBL" id="AC119237">
    <property type="status" value="NOT_ANNOTATED_CDS"/>
    <property type="molecule type" value="Genomic_DNA"/>
</dbReference>
<dbReference type="EMBL" id="AC159893">
    <property type="status" value="NOT_ANNOTATED_CDS"/>
    <property type="molecule type" value="Genomic_DNA"/>
</dbReference>
<dbReference type="EMBL" id="AC174644">
    <property type="status" value="NOT_ANNOTATED_CDS"/>
    <property type="molecule type" value="Genomic_DNA"/>
</dbReference>
<dbReference type="EMBL" id="AC126804">
    <property type="status" value="NOT_ANNOTATED_CDS"/>
    <property type="molecule type" value="Genomic_DNA"/>
</dbReference>
<dbReference type="EMBL" id="BC096527">
    <property type="protein sequence ID" value="AAH96527.1"/>
    <property type="status" value="ALT_INIT"/>
    <property type="molecule type" value="mRNA"/>
</dbReference>
<dbReference type="CCDS" id="CCDS40608.1"/>
<dbReference type="RefSeq" id="NP_001074739.2">
    <property type="nucleotide sequence ID" value="NM_001081270.2"/>
</dbReference>
<dbReference type="SMR" id="Q4VA61"/>
<dbReference type="FunCoup" id="Q4VA61">
    <property type="interactions" value="144"/>
</dbReference>
<dbReference type="STRING" id="10090.ENSMUSP00000034592"/>
<dbReference type="GlyConnect" id="2267">
    <property type="glycosylation" value="4 N-Linked glycans (4 sites)"/>
</dbReference>
<dbReference type="GlyCosmos" id="Q4VA61">
    <property type="glycosylation" value="11 sites, 4 glycans"/>
</dbReference>
<dbReference type="GlyGen" id="Q4VA61">
    <property type="glycosylation" value="21 sites, 14 N-linked glycans (15 sites)"/>
</dbReference>
<dbReference type="iPTMnet" id="Q4VA61"/>
<dbReference type="PhosphoSitePlus" id="Q4VA61"/>
<dbReference type="jPOST" id="Q4VA61"/>
<dbReference type="PaxDb" id="10090-ENSMUSP00000034592"/>
<dbReference type="ProteomicsDB" id="277409"/>
<dbReference type="Antibodypedia" id="62371">
    <property type="antibodies" value="25 antibodies from 14 providers"/>
</dbReference>
<dbReference type="Ensembl" id="ENSMUST00000034592.11">
    <property type="protein sequence ID" value="ENSMUSP00000034592.10"/>
    <property type="gene ID" value="ENSMUSG00000032087.12"/>
</dbReference>
<dbReference type="GeneID" id="114873"/>
<dbReference type="UCSC" id="uc009pga.1">
    <property type="organism name" value="mouse"/>
</dbReference>
<dbReference type="AGR" id="MGI:2150309"/>
<dbReference type="MGI" id="MGI:2150309">
    <property type="gene designation" value="Dscaml1"/>
</dbReference>
<dbReference type="VEuPathDB" id="HostDB:ENSMUSG00000032087"/>
<dbReference type="eggNOG" id="KOG3510">
    <property type="taxonomic scope" value="Eukaryota"/>
</dbReference>
<dbReference type="GeneTree" id="ENSGT00940000155354"/>
<dbReference type="InParanoid" id="Q4VA61"/>
<dbReference type="PhylomeDB" id="Q4VA61"/>
<dbReference type="Reactome" id="R-MMU-376172">
    <property type="pathway name" value="DSCAM interactions"/>
</dbReference>
<dbReference type="ChiTaRS" id="Dscaml1">
    <property type="organism name" value="mouse"/>
</dbReference>
<dbReference type="PRO" id="PR:Q4VA61"/>
<dbReference type="Proteomes" id="UP000000589">
    <property type="component" value="Chromosome 9"/>
</dbReference>
<dbReference type="RNAct" id="Q4VA61">
    <property type="molecule type" value="protein"/>
</dbReference>
<dbReference type="Bgee" id="ENSMUSG00000032087">
    <property type="expression patterns" value="Expressed in retinal neural layer and 123 other cell types or tissues"/>
</dbReference>
<dbReference type="ExpressionAtlas" id="Q4VA61">
    <property type="expression patterns" value="baseline and differential"/>
</dbReference>
<dbReference type="GO" id="GO:0005886">
    <property type="term" value="C:plasma membrane"/>
    <property type="evidence" value="ECO:0000266"/>
    <property type="project" value="MGI"/>
</dbReference>
<dbReference type="GO" id="GO:0045202">
    <property type="term" value="C:synapse"/>
    <property type="evidence" value="ECO:0007669"/>
    <property type="project" value="UniProtKB-SubCell"/>
</dbReference>
<dbReference type="GO" id="GO:0016338">
    <property type="term" value="P:calcium-independent cell-cell adhesion via plasma membrane cell-adhesion molecules"/>
    <property type="evidence" value="ECO:0000266"/>
    <property type="project" value="MGI"/>
</dbReference>
<dbReference type="GO" id="GO:0070593">
    <property type="term" value="P:dendrite self-avoidance"/>
    <property type="evidence" value="ECO:0000315"/>
    <property type="project" value="UniProtKB"/>
</dbReference>
<dbReference type="GO" id="GO:0007156">
    <property type="term" value="P:homophilic cell adhesion via plasma membrane adhesion molecules"/>
    <property type="evidence" value="ECO:0000266"/>
    <property type="project" value="MGI"/>
</dbReference>
<dbReference type="GO" id="GO:0007162">
    <property type="term" value="P:negative regulation of cell adhesion"/>
    <property type="evidence" value="ECO:0000315"/>
    <property type="project" value="UniProtKB"/>
</dbReference>
<dbReference type="CDD" id="cd00063">
    <property type="entry name" value="FN3"/>
    <property type="match status" value="6"/>
</dbReference>
<dbReference type="CDD" id="cd00096">
    <property type="entry name" value="Ig"/>
    <property type="match status" value="2"/>
</dbReference>
<dbReference type="CDD" id="cd05734">
    <property type="entry name" value="Ig_DSCAM"/>
    <property type="match status" value="1"/>
</dbReference>
<dbReference type="CDD" id="cd05735">
    <property type="entry name" value="Ig_DSCAM"/>
    <property type="match status" value="1"/>
</dbReference>
<dbReference type="FunFam" id="2.60.40.10:FF:000333">
    <property type="entry name" value="Down syndrome cell adhesion molecule"/>
    <property type="match status" value="1"/>
</dbReference>
<dbReference type="FunFam" id="2.60.40.10:FF:000729">
    <property type="entry name" value="Down syndrome cell adhesion molecule"/>
    <property type="match status" value="1"/>
</dbReference>
<dbReference type="FunFam" id="2.60.40.10:FF:000141">
    <property type="entry name" value="Down syndrome cell adhesion molecule a"/>
    <property type="match status" value="1"/>
</dbReference>
<dbReference type="FunFam" id="2.60.40.10:FF:000176">
    <property type="entry name" value="Down syndrome cell adhesion molecule a"/>
    <property type="match status" value="1"/>
</dbReference>
<dbReference type="FunFam" id="2.60.40.10:FF:000215">
    <property type="entry name" value="Down syndrome cell adhesion molecule a"/>
    <property type="match status" value="1"/>
</dbReference>
<dbReference type="FunFam" id="2.60.40.10:FF:000017">
    <property type="entry name" value="Down syndrome cell adhesion molecule b"/>
    <property type="match status" value="1"/>
</dbReference>
<dbReference type="FunFam" id="2.60.40.10:FF:000104">
    <property type="entry name" value="Down syndrome cell adhesion molecule b"/>
    <property type="match status" value="1"/>
</dbReference>
<dbReference type="FunFam" id="2.60.40.10:FF:000167">
    <property type="entry name" value="Down syndrome cell adhesion molecule b"/>
    <property type="match status" value="1"/>
</dbReference>
<dbReference type="FunFam" id="2.60.40.10:FF:000172">
    <property type="entry name" value="Down syndrome cell adhesion molecule b"/>
    <property type="match status" value="1"/>
</dbReference>
<dbReference type="FunFam" id="2.60.40.10:FF:000219">
    <property type="entry name" value="Down syndrome cell adhesion molecule homolog"/>
    <property type="match status" value="1"/>
</dbReference>
<dbReference type="FunFam" id="2.60.40.10:FF:000229">
    <property type="entry name" value="Down syndrome cell adhesion molecule homolog"/>
    <property type="match status" value="1"/>
</dbReference>
<dbReference type="FunFam" id="2.60.40.10:FF:000120">
    <property type="entry name" value="Down syndrome cell adhesion molecule like 1"/>
    <property type="match status" value="1"/>
</dbReference>
<dbReference type="FunFam" id="2.60.40.10:FF:000264">
    <property type="entry name" value="Down syndrome cell adhesion molecule like 1"/>
    <property type="match status" value="1"/>
</dbReference>
<dbReference type="FunFam" id="2.60.40.10:FF:000315">
    <property type="entry name" value="Down syndrome cell adhesion molecule like 1"/>
    <property type="match status" value="1"/>
</dbReference>
<dbReference type="FunFam" id="2.60.40.10:FF:000482">
    <property type="entry name" value="Down syndrome cell adhesion molecule like 1"/>
    <property type="match status" value="1"/>
</dbReference>
<dbReference type="FunFam" id="2.60.40.10:FF:000477">
    <property type="entry name" value="DS cell adhesion molecule like 1"/>
    <property type="match status" value="1"/>
</dbReference>
<dbReference type="Gene3D" id="2.60.40.10">
    <property type="entry name" value="Immunoglobulins"/>
    <property type="match status" value="16"/>
</dbReference>
<dbReference type="InterPro" id="IPR056754">
    <property type="entry name" value="DSCAM/DSCAML_C"/>
</dbReference>
<dbReference type="InterPro" id="IPR003961">
    <property type="entry name" value="FN3_dom"/>
</dbReference>
<dbReference type="InterPro" id="IPR036116">
    <property type="entry name" value="FN3_sf"/>
</dbReference>
<dbReference type="InterPro" id="IPR007110">
    <property type="entry name" value="Ig-like_dom"/>
</dbReference>
<dbReference type="InterPro" id="IPR036179">
    <property type="entry name" value="Ig-like_dom_sf"/>
</dbReference>
<dbReference type="InterPro" id="IPR013783">
    <property type="entry name" value="Ig-like_fold"/>
</dbReference>
<dbReference type="InterPro" id="IPR013098">
    <property type="entry name" value="Ig_I-set"/>
</dbReference>
<dbReference type="InterPro" id="IPR003599">
    <property type="entry name" value="Ig_sub"/>
</dbReference>
<dbReference type="InterPro" id="IPR003598">
    <property type="entry name" value="Ig_sub2"/>
</dbReference>
<dbReference type="InterPro" id="IPR013106">
    <property type="entry name" value="Ig_V-set"/>
</dbReference>
<dbReference type="PANTHER" id="PTHR10075">
    <property type="entry name" value="BASIGIN RELATED"/>
    <property type="match status" value="1"/>
</dbReference>
<dbReference type="PANTHER" id="PTHR10075:SF100">
    <property type="entry name" value="FASCICLIN-2"/>
    <property type="match status" value="1"/>
</dbReference>
<dbReference type="Pfam" id="PF00041">
    <property type="entry name" value="fn3"/>
    <property type="match status" value="5"/>
</dbReference>
<dbReference type="Pfam" id="PF25059">
    <property type="entry name" value="FN3_DSCAM-DSCAML_C"/>
    <property type="match status" value="1"/>
</dbReference>
<dbReference type="Pfam" id="PF07679">
    <property type="entry name" value="I-set"/>
    <property type="match status" value="4"/>
</dbReference>
<dbReference type="Pfam" id="PF13927">
    <property type="entry name" value="Ig_3"/>
    <property type="match status" value="4"/>
</dbReference>
<dbReference type="SMART" id="SM00060">
    <property type="entry name" value="FN3"/>
    <property type="match status" value="6"/>
</dbReference>
<dbReference type="SMART" id="SM00409">
    <property type="entry name" value="IG"/>
    <property type="match status" value="10"/>
</dbReference>
<dbReference type="SMART" id="SM00408">
    <property type="entry name" value="IGc2"/>
    <property type="match status" value="9"/>
</dbReference>
<dbReference type="SMART" id="SM00406">
    <property type="entry name" value="IGv"/>
    <property type="match status" value="2"/>
</dbReference>
<dbReference type="SUPFAM" id="SSF49265">
    <property type="entry name" value="Fibronectin type III"/>
    <property type="match status" value="3"/>
</dbReference>
<dbReference type="SUPFAM" id="SSF48726">
    <property type="entry name" value="Immunoglobulin"/>
    <property type="match status" value="10"/>
</dbReference>
<dbReference type="PROSITE" id="PS50853">
    <property type="entry name" value="FN3"/>
    <property type="match status" value="6"/>
</dbReference>
<dbReference type="PROSITE" id="PS50835">
    <property type="entry name" value="IG_LIKE"/>
    <property type="match status" value="9"/>
</dbReference>
<protein>
    <recommendedName>
        <fullName evidence="8">Cell adhesion molecule DSCAML1</fullName>
    </recommendedName>
    <alternativeName>
        <fullName>Down syndrome cell adhesion molecule-like protein 1 homolog</fullName>
    </alternativeName>
</protein>
<name>DSCL1_MOUSE</name>
<keyword id="KW-0130">Cell adhesion</keyword>
<keyword id="KW-1003">Cell membrane</keyword>
<keyword id="KW-1015">Disulfide bond</keyword>
<keyword id="KW-0325">Glycoprotein</keyword>
<keyword id="KW-0393">Immunoglobulin domain</keyword>
<keyword id="KW-0472">Membrane</keyword>
<keyword id="KW-0524">Neurogenesis</keyword>
<keyword id="KW-1185">Reference proteome</keyword>
<keyword id="KW-0677">Repeat</keyword>
<keyword id="KW-0732">Signal</keyword>
<keyword id="KW-0770">Synapse</keyword>
<keyword id="KW-0812">Transmembrane</keyword>
<keyword id="KW-1133">Transmembrane helix</keyword>
<proteinExistence type="evidence at protein level"/>
<reference key="1">
    <citation type="journal article" date="2009" name="PLoS Biol.">
        <title>Lineage-specific biology revealed by a finished genome assembly of the mouse.</title>
        <authorList>
            <person name="Church D.M."/>
            <person name="Goodstadt L."/>
            <person name="Hillier L.W."/>
            <person name="Zody M.C."/>
            <person name="Goldstein S."/>
            <person name="She X."/>
            <person name="Bult C.J."/>
            <person name="Agarwala R."/>
            <person name="Cherry J.L."/>
            <person name="DiCuccio M."/>
            <person name="Hlavina W."/>
            <person name="Kapustin Y."/>
            <person name="Meric P."/>
            <person name="Maglott D."/>
            <person name="Birtle Z."/>
            <person name="Marques A.C."/>
            <person name="Graves T."/>
            <person name="Zhou S."/>
            <person name="Teague B."/>
            <person name="Potamousis K."/>
            <person name="Churas C."/>
            <person name="Place M."/>
            <person name="Herschleb J."/>
            <person name="Runnheim R."/>
            <person name="Forrest D."/>
            <person name="Amos-Landgraf J."/>
            <person name="Schwartz D.C."/>
            <person name="Cheng Z."/>
            <person name="Lindblad-Toh K."/>
            <person name="Eichler E.E."/>
            <person name="Ponting C.P."/>
        </authorList>
    </citation>
    <scope>NUCLEOTIDE SEQUENCE [LARGE SCALE GENOMIC DNA]</scope>
    <source>
        <strain>C57BL/6J</strain>
    </source>
</reference>
<reference key="2">
    <citation type="journal article" date="2004" name="Genome Res.">
        <title>The status, quality, and expansion of the NIH full-length cDNA project: the Mammalian Gene Collection (MGC).</title>
        <authorList>
            <consortium name="The MGC Project Team"/>
        </authorList>
    </citation>
    <scope>NUCLEOTIDE SEQUENCE [LARGE SCALE MRNA] OF 723-2053</scope>
    <source>
        <strain>C57BL/6J</strain>
        <tissue>Brain</tissue>
    </source>
</reference>
<reference key="3">
    <citation type="journal article" date="2009" name="Neuron">
        <title>DSCAM and DSCAML1 function in self-avoidance in multiple cell types in the developing mouse retina.</title>
        <authorList>
            <person name="Fuerst P.G."/>
            <person name="Bruce F."/>
            <person name="Tian M."/>
            <person name="Wei W."/>
            <person name="Elstrott J."/>
            <person name="Feller M.B."/>
            <person name="Erskine L."/>
            <person name="Singer J.H."/>
            <person name="Burgess R.W."/>
        </authorList>
    </citation>
    <scope>FUNCTION</scope>
    <scope>DISRUPTION PHENOTYPE</scope>
    <scope>TISSUE SPECIFICITY</scope>
</reference>
<comment type="function">
    <text evidence="1 7">Cell adhesion molecule that plays a role in neuronal self-avoidance. Promotes repulsion between specific neuronal processes of either the same cell or the same subtype of cells. Promotes both isoneuronal self-avoidance for creating an orderly neurite arborization in retinal rod bipolar cells and heteroneuronal self-avoidance to maintain mosaic spacing between AII amacrine cells (PubMed:19945391). Adhesion molecule that promotes lamina-specific synaptic connections in the retina: expressed in specific subsets of interneurons and retinal ganglion cells (RGCs) and promotes synaptic connectivity via homophilic interactions (By similarity).</text>
</comment>
<comment type="subunit">
    <text evidence="1">Homodimer; mediates homophilic interactions to promote cell adhesion.</text>
</comment>
<comment type="subcellular location">
    <subcellularLocation>
        <location evidence="2">Cell membrane</location>
        <topology evidence="8">Single-pass type I membrane protein</topology>
    </subcellularLocation>
    <subcellularLocation>
        <location evidence="1">Synapse</location>
    </subcellularLocation>
</comment>
<comment type="tissue specificity">
    <text evidence="7">In the retina, expressed in the rod photoreceptors, AII amacrine cells and rod bipolar cells (at protein level).</text>
</comment>
<comment type="disruption phenotype">
    <text evidence="7">The inner nuclear and inner plexiform layers in the retina are disorganised at postnatal day 20 (P20). AII amacrine cell populations are randomly distributed or pulled into clumps and rod bipolar show fasciculated dendrites.</text>
</comment>
<comment type="sequence caution" evidence="8">
    <conflict type="erroneous initiation">
        <sequence resource="EMBL-CDS" id="AAH96527"/>
    </conflict>
</comment>
<evidence type="ECO:0000250" key="1">
    <source>
        <dbReference type="UniProtKB" id="E1C8P7"/>
    </source>
</evidence>
<evidence type="ECO:0000250" key="2">
    <source>
        <dbReference type="UniProtKB" id="Q8TD84"/>
    </source>
</evidence>
<evidence type="ECO:0000255" key="3"/>
<evidence type="ECO:0000255" key="4">
    <source>
        <dbReference type="PROSITE-ProRule" id="PRU00114"/>
    </source>
</evidence>
<evidence type="ECO:0000255" key="5">
    <source>
        <dbReference type="PROSITE-ProRule" id="PRU00316"/>
    </source>
</evidence>
<evidence type="ECO:0000256" key="6">
    <source>
        <dbReference type="SAM" id="MobiDB-lite"/>
    </source>
</evidence>
<evidence type="ECO:0000269" key="7">
    <source>
    </source>
</evidence>
<evidence type="ECO:0000305" key="8"/>
<sequence length="2053" mass="224240">MWLVTFLLLLDSLHKARPEDVGTSLYFVNDSLQHVTFSSSVGVVVPCPAAGSPSAALRWYLATGDDIYDVPHIRHVHANGTLQLFPFSPSAFNSFIHDNDYFCTAENAAGKIRSPNIRIKAVFREPYTVRVEDQRSMRGNVAVFKCLIPSSVQEYVSVVSWEKDTVSITPENRFFITSHGGLYISDVQKEDALSTYRCITQHKYSGETRQSNGARLSVTDPAESIPTILDGFHSQEVWTGHSVELPCAASGYPIPAIRWLKDGRPLPADSRWAKRITGLTISDLRTEDSGTYICEVTNTFGSAEANGILTVIDPLHVTLTPKKLKTGIGSTVILSCALTGSPEFTIRWYRNTELVLPGEAISIRGLSNETLLISSAQKSHSGAYQCFATRKAQTAQDFAIIVLEDGTPRIVSSFSEKVVNPGEQFSLMCAAKGAPPPTVTWALDDEPVVRDGSHRTNQYTMSDGTTISHMNVTGPQIRDGGVYRCTARNSVGSAEYQARINVRGPPSIRAMRNITAVAGRDTLINCRVIGYPYYSIKWYKDALLLPDNHRQVVFENGTLKLTDVQKGMDEGEYLCSVLIQPQLSISQSVHVAVKVPPLIQPFEFPPASIGQLLYIPCVVSSGDMPIRITWRKDGQVIISGSGVTIESKEFMSSLQISSVSLKHNGNYTCIASNAAATVSRERQLIVRVPPRFVVQPNNQDGIYGKAGVLNCSVDGYPPPKVMWKHAKGSGNPQQYHPVPLTGRIQILPNSSLLIRHVLEEDIGYYLCQASNGVGTDISKAMFLTVKIPAMITSHPNTTIAIKGHPKELNCTARGERPIIIRWEKGDTVIDPDRVMRYAIATKDNGDEVVSTLKLKPADRGDSVFFSCHAINSYGEDRGLIQLTVQEPPDPPELEIREVKARSMNLRWTQRFDGNSIITGFDIEYKNKSDSWDFKQSTRNISPTINQANIVDLHPASVYSIRMYSFNKIGRSEPSKELTISTEEAAPDGPPMDVTLQPVTSQSIQVTWKAPKKELQNGVIRGYQIGYRENSPGSNGQYSIVEMKATGDSEVYTLDNLKKFAQYGVVVQAFNRAGTGPSSSEINATTLEDVPSQPPENVRALSITSDVAVISWSEPPRSTLNGVLKGYRVIFWSLYVDGEWGEMQNVTTTRERVELRGMEKFTNYSVQVLAYTQAGDGVRSSVLYIQTKEDVPGPPAGIKAVPSSASSVVVSWLPPTKPNGVIRKYTIFCSSPGSGQPAPSEYETSPEQLFYRIAHLNRGQQYLLWVAAVTSAGRGNSSEKVTIEPAGKAPAKIISFGGTVTTPWMKDVRLPCNSVGDPAPAVKWTKDSEDSAIPVSLDGHRLIHTNGTLLLRAVKAEDSGYYTCTATNTGGFDTIIVNLLVQVPPDQPRLTVSKTSASSITLTWIPGDNGGSSIRGFVLQYSVDNSEEWKDVFISSSERSFKLDSLKCGTWYKVKLAAKNSVGSGRISEIIEAKTHGREPSFSKDQHLFTHINSTHARLNLQGWNNGGCPITAIVLEYRPKGTWAWQGVRANSSTEVFLTELREATWYELRMRACNSAGCGNETAQFATLDYDGSTIPPIKSAQGEGDDVKKLFTIGCPVILATLGVALLFVVRKKRKEKRLKRLRDAKSLAEMLISKNNRSFDTPVKGPPQGPRLHIDIPRVQLLIEDKEGIKQLGDDKATIPVTDAEFSQAVNPQSFCTGVSLHHPALIQSTGPLIDMSDIRPGTNPVSRKNVKSAHSTRNRYSSQWTLTKCQASTPARTLTSDWRTVGSQHGVTVTESDSYSASLSQDTDKGRNSMVSTESASSTYEELARAYEHAKLEEQLQHAKFEITECFISDSSSDQMTTGTNENADSMTSMSTPSEPGICRFTASPPKPQDADRGKNVAVPIPHRANKSDYCNLPLYTKSEAFFRKADGREPCPVVPPREASMRNLTRAYHTQARHLTLDPASKPLGLPHPGATAATATATLPQRTLAMPAPPAGTAPPAPGPTPSEPSAAPSAAPPAPSTEPPRAGGPHTKMGGSRDSLLEMSTPGVGRSQKQGAGAYSKSYTLV</sequence>
<organism>
    <name type="scientific">Mus musculus</name>
    <name type="common">Mouse</name>
    <dbReference type="NCBI Taxonomy" id="10090"/>
    <lineage>
        <taxon>Eukaryota</taxon>
        <taxon>Metazoa</taxon>
        <taxon>Chordata</taxon>
        <taxon>Craniata</taxon>
        <taxon>Vertebrata</taxon>
        <taxon>Euteleostomi</taxon>
        <taxon>Mammalia</taxon>
        <taxon>Eutheria</taxon>
        <taxon>Euarchontoglires</taxon>
        <taxon>Glires</taxon>
        <taxon>Rodentia</taxon>
        <taxon>Myomorpha</taxon>
        <taxon>Muroidea</taxon>
        <taxon>Muridae</taxon>
        <taxon>Murinae</taxon>
        <taxon>Mus</taxon>
        <taxon>Mus</taxon>
    </lineage>
</organism>
<feature type="signal peptide" evidence="3">
    <location>
        <begin position="1"/>
        <end position="18"/>
    </location>
</feature>
<feature type="chain" id="PRO_0000392480" description="Cell adhesion molecule DSCAML1">
    <location>
        <begin position="19"/>
        <end position="2053"/>
    </location>
</feature>
<feature type="topological domain" description="Extracellular" evidence="3">
    <location>
        <begin position="19"/>
        <end position="1591"/>
    </location>
</feature>
<feature type="transmembrane region" description="Helical" evidence="3">
    <location>
        <begin position="1592"/>
        <end position="1612"/>
    </location>
</feature>
<feature type="topological domain" description="Cytoplasmic" evidence="3">
    <location>
        <begin position="1613"/>
        <end position="2053"/>
    </location>
</feature>
<feature type="domain" description="Ig-like C2-type 1">
    <location>
        <begin position="19"/>
        <end position="119"/>
    </location>
</feature>
<feature type="domain" description="Ig-like C2-type 2">
    <location>
        <begin position="115"/>
        <end position="217"/>
    </location>
</feature>
<feature type="domain" description="Ig-like C2-type 3">
    <location>
        <begin position="226"/>
        <end position="310"/>
    </location>
</feature>
<feature type="domain" description="Ig-like C2-type 4">
    <location>
        <begin position="314"/>
        <end position="396"/>
    </location>
</feature>
<feature type="domain" description="Ig-like C2-type 5">
    <location>
        <begin position="408"/>
        <end position="501"/>
    </location>
</feature>
<feature type="domain" description="Ig-like C2-type 6">
    <location>
        <begin position="506"/>
        <end position="586"/>
    </location>
</feature>
<feature type="domain" description="Ig-like C2-type 7">
    <location>
        <begin position="596"/>
        <end position="685"/>
    </location>
</feature>
<feature type="domain" description="Ig-like C2-type 8">
    <location>
        <begin position="690"/>
        <end position="784"/>
    </location>
</feature>
<feature type="domain" description="Ig-like C2-type 9">
    <location>
        <begin position="788"/>
        <end position="885"/>
    </location>
</feature>
<feature type="domain" description="Fibronectin type-III 1" evidence="5">
    <location>
        <begin position="887"/>
        <end position="984"/>
    </location>
</feature>
<feature type="domain" description="Fibronectin type-III 2" evidence="5">
    <location>
        <begin position="989"/>
        <end position="1088"/>
    </location>
</feature>
<feature type="domain" description="Fibronectin type-III 3" evidence="5">
    <location>
        <begin position="1093"/>
        <end position="1189"/>
    </location>
</feature>
<feature type="domain" description="Fibronectin type-III 4" evidence="5">
    <location>
        <begin position="1193"/>
        <end position="1288"/>
    </location>
</feature>
<feature type="domain" description="Ig-like C2-type 10">
    <location>
        <begin position="1278"/>
        <end position="1377"/>
    </location>
</feature>
<feature type="domain" description="Fibronectin type-III 5" evidence="5">
    <location>
        <begin position="1383"/>
        <end position="1477"/>
    </location>
</feature>
<feature type="domain" description="Fibronectin type-III 6" evidence="5">
    <location>
        <begin position="1478"/>
        <end position="1578"/>
    </location>
</feature>
<feature type="region of interest" description="Disordered" evidence="6">
    <location>
        <begin position="1716"/>
        <end position="1741"/>
    </location>
</feature>
<feature type="region of interest" description="Disordered" evidence="6">
    <location>
        <begin position="1773"/>
        <end position="1803"/>
    </location>
</feature>
<feature type="region of interest" description="Disordered" evidence="6">
    <location>
        <begin position="1840"/>
        <end position="1862"/>
    </location>
</feature>
<feature type="region of interest" description="Disordered" evidence="6">
    <location>
        <begin position="1974"/>
        <end position="2053"/>
    </location>
</feature>
<feature type="compositionally biased region" description="Basic residues" evidence="6">
    <location>
        <begin position="1732"/>
        <end position="1741"/>
    </location>
</feature>
<feature type="compositionally biased region" description="Polar residues" evidence="6">
    <location>
        <begin position="1773"/>
        <end position="1789"/>
    </location>
</feature>
<feature type="compositionally biased region" description="Pro residues" evidence="6">
    <location>
        <begin position="1977"/>
        <end position="1993"/>
    </location>
</feature>
<feature type="glycosylation site" description="N-linked (GlcNAc...) asparagine" evidence="3">
    <location>
        <position position="79"/>
    </location>
</feature>
<feature type="glycosylation site" description="N-linked (GlcNAc...) asparagine" evidence="3">
    <location>
        <position position="368"/>
    </location>
</feature>
<feature type="glycosylation site" description="N-linked (GlcNAc...) asparagine" evidence="3">
    <location>
        <position position="471"/>
    </location>
</feature>
<feature type="glycosylation site" description="N-linked (GlcNAc...) asparagine" evidence="3">
    <location>
        <position position="666"/>
    </location>
</feature>
<feature type="glycosylation site" description="N-linked (GlcNAc...) asparagine" evidence="3">
    <location>
        <position position="710"/>
    </location>
</feature>
<feature type="glycosylation site" description="N-linked (GlcNAc...) asparagine" evidence="3">
    <location>
        <position position="809"/>
    </location>
</feature>
<feature type="glycosylation site" description="N-linked (GlcNAc...) asparagine" evidence="3">
    <location>
        <position position="1144"/>
    </location>
</feature>
<feature type="glycosylation site" description="N-linked (GlcNAc...) asparagine" evidence="3">
    <location>
        <position position="1162"/>
    </location>
</feature>
<feature type="glycosylation site" description="N-linked (GlcNAc...) asparagine" evidence="3">
    <location>
        <position position="1345"/>
    </location>
</feature>
<feature type="glycosylation site" description="N-linked (GlcNAc...) asparagine" evidence="3">
    <location>
        <position position="1561"/>
    </location>
</feature>
<feature type="disulfide bond" evidence="4">
    <location>
        <begin position="47"/>
        <end position="103"/>
    </location>
</feature>
<feature type="disulfide bond" evidence="4">
    <location>
        <begin position="146"/>
        <end position="198"/>
    </location>
</feature>
<feature type="disulfide bond" evidence="4">
    <location>
        <begin position="247"/>
        <end position="294"/>
    </location>
</feature>
<feature type="disulfide bond" evidence="4">
    <location>
        <begin position="336"/>
        <end position="386"/>
    </location>
</feature>
<feature type="disulfide bond" evidence="4">
    <location>
        <begin position="429"/>
        <end position="485"/>
    </location>
</feature>
<feature type="disulfide bond" evidence="4">
    <location>
        <begin position="526"/>
        <end position="575"/>
    </location>
</feature>
<feature type="disulfide bond" evidence="4">
    <location>
        <begin position="617"/>
        <end position="669"/>
    </location>
</feature>
<feature type="disulfide bond" evidence="4">
    <location>
        <begin position="711"/>
        <end position="767"/>
    </location>
</feature>
<feature type="disulfide bond" evidence="4">
    <location>
        <begin position="810"/>
        <end position="867"/>
    </location>
</feature>
<feature type="disulfide bond" evidence="4">
    <location>
        <begin position="1311"/>
        <end position="1363"/>
    </location>
</feature>
<gene>
    <name type="primary">Dscaml1</name>
</gene>
<accession>Q4VA61</accession>